<accession>A5CCC1</accession>
<gene>
    <name type="ordered locus">OTBS_0250</name>
</gene>
<proteinExistence type="inferred from homology"/>
<sequence>MVYSMDLMPIILASQSESRLRLLKKINIVPSQIIPANIDESSLPAELPKNLALRLAIQKADKIAQNIEDGYVIAADTVVAVGRRILPKTITDFDVEYCLKMLSGRRHRVFTGVKITKVKHNNIIAFNTRTVESIVKVKRLTPQEIATYVATKQGLNKAGGHSIEGMWECFIQFMRGSYSNIMGLPLFETRNMLFSLGFDCIRSNQ</sequence>
<dbReference type="EC" id="3.6.1.9" evidence="1"/>
<dbReference type="EMBL" id="AM494475">
    <property type="protein sequence ID" value="CAM79316.1"/>
    <property type="molecule type" value="Genomic_DNA"/>
</dbReference>
<dbReference type="SMR" id="A5CCC1"/>
<dbReference type="KEGG" id="ots:OTBS_0250"/>
<dbReference type="eggNOG" id="COG0424">
    <property type="taxonomic scope" value="Bacteria"/>
</dbReference>
<dbReference type="HOGENOM" id="CLU_040416_2_0_5"/>
<dbReference type="Proteomes" id="UP000001565">
    <property type="component" value="Chromosome"/>
</dbReference>
<dbReference type="GO" id="GO:0005737">
    <property type="term" value="C:cytoplasm"/>
    <property type="evidence" value="ECO:0007669"/>
    <property type="project" value="UniProtKB-SubCell"/>
</dbReference>
<dbReference type="GO" id="GO:0047429">
    <property type="term" value="F:nucleoside triphosphate diphosphatase activity"/>
    <property type="evidence" value="ECO:0007669"/>
    <property type="project" value="UniProtKB-EC"/>
</dbReference>
<dbReference type="GO" id="GO:0009117">
    <property type="term" value="P:nucleotide metabolic process"/>
    <property type="evidence" value="ECO:0007669"/>
    <property type="project" value="UniProtKB-KW"/>
</dbReference>
<dbReference type="CDD" id="cd00555">
    <property type="entry name" value="Maf"/>
    <property type="match status" value="1"/>
</dbReference>
<dbReference type="Gene3D" id="3.90.950.10">
    <property type="match status" value="1"/>
</dbReference>
<dbReference type="HAMAP" id="MF_00528">
    <property type="entry name" value="Maf"/>
    <property type="match status" value="1"/>
</dbReference>
<dbReference type="InterPro" id="IPR029001">
    <property type="entry name" value="ITPase-like_fam"/>
</dbReference>
<dbReference type="InterPro" id="IPR003697">
    <property type="entry name" value="Maf-like"/>
</dbReference>
<dbReference type="NCBIfam" id="TIGR00172">
    <property type="entry name" value="maf"/>
    <property type="match status" value="1"/>
</dbReference>
<dbReference type="PANTHER" id="PTHR43213">
    <property type="entry name" value="BIFUNCTIONAL DTTP/UTP PYROPHOSPHATASE/METHYLTRANSFERASE PROTEIN-RELATED"/>
    <property type="match status" value="1"/>
</dbReference>
<dbReference type="PANTHER" id="PTHR43213:SF5">
    <property type="entry name" value="BIFUNCTIONAL DTTP_UTP PYROPHOSPHATASE_METHYLTRANSFERASE PROTEIN-RELATED"/>
    <property type="match status" value="1"/>
</dbReference>
<dbReference type="Pfam" id="PF02545">
    <property type="entry name" value="Maf"/>
    <property type="match status" value="1"/>
</dbReference>
<dbReference type="PIRSF" id="PIRSF006305">
    <property type="entry name" value="Maf"/>
    <property type="match status" value="1"/>
</dbReference>
<dbReference type="SUPFAM" id="SSF52972">
    <property type="entry name" value="ITPase-like"/>
    <property type="match status" value="1"/>
</dbReference>
<reference key="1">
    <citation type="journal article" date="2007" name="Proc. Natl. Acad. Sci. U.S.A.">
        <title>The Orientia tsutsugamushi genome reveals massive proliferation of conjugative type IV secretion system and host-cell interaction genes.</title>
        <authorList>
            <person name="Cho N.-H."/>
            <person name="Kim H.-R."/>
            <person name="Lee J.-H."/>
            <person name="Kim S.-Y."/>
            <person name="Kim J."/>
            <person name="Cha S."/>
            <person name="Kim S.-Y."/>
            <person name="Darby A.C."/>
            <person name="Fuxelius H.-H."/>
            <person name="Yin J."/>
            <person name="Kim J.H."/>
            <person name="Kim J."/>
            <person name="Lee S.J."/>
            <person name="Koh Y.-S."/>
            <person name="Jang W.-J."/>
            <person name="Park K.-H."/>
            <person name="Andersson S.G.E."/>
            <person name="Choi M.-S."/>
            <person name="Kim I.-S."/>
        </authorList>
    </citation>
    <scope>NUCLEOTIDE SEQUENCE [LARGE SCALE GENOMIC DNA]</scope>
    <source>
        <strain>Boryong</strain>
    </source>
</reference>
<keyword id="KW-0963">Cytoplasm</keyword>
<keyword id="KW-0378">Hydrolase</keyword>
<keyword id="KW-0546">Nucleotide metabolism</keyword>
<keyword id="KW-1185">Reference proteome</keyword>
<organism>
    <name type="scientific">Orientia tsutsugamushi (strain Boryong)</name>
    <name type="common">Rickettsia tsutsugamushi</name>
    <dbReference type="NCBI Taxonomy" id="357244"/>
    <lineage>
        <taxon>Bacteria</taxon>
        <taxon>Pseudomonadati</taxon>
        <taxon>Pseudomonadota</taxon>
        <taxon>Alphaproteobacteria</taxon>
        <taxon>Rickettsiales</taxon>
        <taxon>Rickettsiaceae</taxon>
        <taxon>Rickettsieae</taxon>
        <taxon>Orientia</taxon>
    </lineage>
</organism>
<evidence type="ECO:0000255" key="1">
    <source>
        <dbReference type="HAMAP-Rule" id="MF_00528"/>
    </source>
</evidence>
<name>NTPP_ORITB</name>
<feature type="chain" id="PRO_1000060952" description="Nucleoside triphosphate pyrophosphatase">
    <location>
        <begin position="1"/>
        <end position="205"/>
    </location>
</feature>
<feature type="active site" description="Proton acceptor" evidence="1">
    <location>
        <position position="76"/>
    </location>
</feature>
<comment type="function">
    <text evidence="1">Nucleoside triphosphate pyrophosphatase. May have a dual role in cell division arrest and in preventing the incorporation of modified nucleotides into cellular nucleic acids.</text>
</comment>
<comment type="catalytic activity">
    <reaction evidence="1">
        <text>a ribonucleoside 5'-triphosphate + H2O = a ribonucleoside 5'-phosphate + diphosphate + H(+)</text>
        <dbReference type="Rhea" id="RHEA:23996"/>
        <dbReference type="ChEBI" id="CHEBI:15377"/>
        <dbReference type="ChEBI" id="CHEBI:15378"/>
        <dbReference type="ChEBI" id="CHEBI:33019"/>
        <dbReference type="ChEBI" id="CHEBI:58043"/>
        <dbReference type="ChEBI" id="CHEBI:61557"/>
        <dbReference type="EC" id="3.6.1.9"/>
    </reaction>
</comment>
<comment type="catalytic activity">
    <reaction evidence="1">
        <text>a 2'-deoxyribonucleoside 5'-triphosphate + H2O = a 2'-deoxyribonucleoside 5'-phosphate + diphosphate + H(+)</text>
        <dbReference type="Rhea" id="RHEA:44644"/>
        <dbReference type="ChEBI" id="CHEBI:15377"/>
        <dbReference type="ChEBI" id="CHEBI:15378"/>
        <dbReference type="ChEBI" id="CHEBI:33019"/>
        <dbReference type="ChEBI" id="CHEBI:61560"/>
        <dbReference type="ChEBI" id="CHEBI:65317"/>
        <dbReference type="EC" id="3.6.1.9"/>
    </reaction>
</comment>
<comment type="cofactor">
    <cofactor evidence="1">
        <name>a divalent metal cation</name>
        <dbReference type="ChEBI" id="CHEBI:60240"/>
    </cofactor>
</comment>
<comment type="subcellular location">
    <subcellularLocation>
        <location evidence="1">Cytoplasm</location>
    </subcellularLocation>
</comment>
<comment type="similarity">
    <text evidence="1">Belongs to the Maf family.</text>
</comment>
<protein>
    <recommendedName>
        <fullName evidence="1">Nucleoside triphosphate pyrophosphatase</fullName>
        <ecNumber evidence="1">3.6.1.9</ecNumber>
    </recommendedName>
    <alternativeName>
        <fullName evidence="1">Nucleotide pyrophosphatase</fullName>
        <shortName evidence="1">Nucleotide PPase</shortName>
    </alternativeName>
</protein>